<gene>
    <name type="primary">ribF</name>
    <name type="ordered locus">GTNG_3159</name>
</gene>
<evidence type="ECO:0000250" key="1">
    <source>
        <dbReference type="UniProtKB" id="Q59263"/>
    </source>
</evidence>
<evidence type="ECO:0000255" key="2"/>
<evidence type="ECO:0000269" key="3">
    <source>
    </source>
</evidence>
<evidence type="ECO:0000303" key="4">
    <source>
    </source>
</evidence>
<evidence type="ECO:0000305" key="5"/>
<evidence type="ECO:0000312" key="6">
    <source>
        <dbReference type="EMBL" id="ABO68504.1"/>
    </source>
</evidence>
<protein>
    <recommendedName>
        <fullName evidence="4">Putative bifunctional riboflavin kinase/FMN adenylyltransferase</fullName>
    </recommendedName>
    <alternativeName>
        <fullName evidence="5">Putative riboflavin biosynthesis protein RibF</fullName>
    </alternativeName>
    <domain>
        <recommendedName>
            <fullName evidence="4">Riboflavin kinase</fullName>
            <ecNumber evidence="3">2.7.1.26</ecNumber>
        </recommendedName>
        <alternativeName>
            <fullName evidence="1">Flavokinase</fullName>
        </alternativeName>
    </domain>
    <domain>
        <recommendedName>
            <fullName evidence="4">FMN adenylyltransferase</fullName>
            <ecNumber evidence="3">2.7.7.2</ecNumber>
        </recommendedName>
        <alternativeName>
            <fullName evidence="1">FAD pyrophosphorylase</fullName>
        </alternativeName>
        <alternativeName>
            <fullName evidence="1">FAD synthase</fullName>
        </alternativeName>
    </domain>
</protein>
<keyword id="KW-0067">ATP-binding</keyword>
<keyword id="KW-0274">FAD</keyword>
<keyword id="KW-0285">Flavoprotein</keyword>
<keyword id="KW-0288">FMN</keyword>
<keyword id="KW-0418">Kinase</keyword>
<keyword id="KW-0511">Multifunctional enzyme</keyword>
<keyword id="KW-0547">Nucleotide-binding</keyword>
<keyword id="KW-0548">Nucleotidyltransferase</keyword>
<keyword id="KW-0808">Transferase</keyword>
<feature type="chain" id="PRO_0000421234" description="Putative bifunctional riboflavin kinase/FMN adenylyltransferase">
    <location>
        <begin position="1"/>
        <end position="179"/>
    </location>
</feature>
<proteinExistence type="evidence at protein level"/>
<dbReference type="EC" id="2.7.1.26" evidence="3"/>
<dbReference type="EC" id="2.7.7.2" evidence="3"/>
<dbReference type="EMBL" id="CP000557">
    <property type="protein sequence ID" value="ABO68504.1"/>
    <property type="molecule type" value="Genomic_DNA"/>
</dbReference>
<dbReference type="RefSeq" id="WP_011888288.1">
    <property type="nucleotide sequence ID" value="NC_009328.1"/>
</dbReference>
<dbReference type="SMR" id="A4IT50"/>
<dbReference type="KEGG" id="gtn:GTNG_3159"/>
<dbReference type="eggNOG" id="COG0196">
    <property type="taxonomic scope" value="Bacteria"/>
</dbReference>
<dbReference type="HOGENOM" id="CLU_048437_4_2_9"/>
<dbReference type="UniPathway" id="UPA00276">
    <property type="reaction ID" value="UER00406"/>
</dbReference>
<dbReference type="UniPathway" id="UPA00277">
    <property type="reaction ID" value="UER00407"/>
</dbReference>
<dbReference type="Proteomes" id="UP000001578">
    <property type="component" value="Chromosome"/>
</dbReference>
<dbReference type="GO" id="GO:0005524">
    <property type="term" value="F:ATP binding"/>
    <property type="evidence" value="ECO:0007669"/>
    <property type="project" value="UniProtKB-KW"/>
</dbReference>
<dbReference type="GO" id="GO:0003919">
    <property type="term" value="F:FMN adenylyltransferase activity"/>
    <property type="evidence" value="ECO:0007669"/>
    <property type="project" value="UniProtKB-EC"/>
</dbReference>
<dbReference type="GO" id="GO:0008531">
    <property type="term" value="F:riboflavin kinase activity"/>
    <property type="evidence" value="ECO:0007669"/>
    <property type="project" value="UniProtKB-EC"/>
</dbReference>
<dbReference type="GO" id="GO:0006747">
    <property type="term" value="P:FAD biosynthetic process"/>
    <property type="evidence" value="ECO:0007669"/>
    <property type="project" value="UniProtKB-UniPathway"/>
</dbReference>
<dbReference type="GO" id="GO:0009398">
    <property type="term" value="P:FMN biosynthetic process"/>
    <property type="evidence" value="ECO:0007669"/>
    <property type="project" value="UniProtKB-UniPathway"/>
</dbReference>
<dbReference type="GO" id="GO:0009231">
    <property type="term" value="P:riboflavin biosynthetic process"/>
    <property type="evidence" value="ECO:0007669"/>
    <property type="project" value="InterPro"/>
</dbReference>
<dbReference type="CDD" id="cd02064">
    <property type="entry name" value="FAD_synthetase_N"/>
    <property type="match status" value="1"/>
</dbReference>
<dbReference type="Gene3D" id="3.40.50.620">
    <property type="entry name" value="HUPs"/>
    <property type="match status" value="1"/>
</dbReference>
<dbReference type="InterPro" id="IPR015864">
    <property type="entry name" value="FAD_synthase"/>
</dbReference>
<dbReference type="InterPro" id="IPR023468">
    <property type="entry name" value="Riboflavin_kinase"/>
</dbReference>
<dbReference type="InterPro" id="IPR014729">
    <property type="entry name" value="Rossmann-like_a/b/a_fold"/>
</dbReference>
<dbReference type="PANTHER" id="PTHR22749:SF6">
    <property type="entry name" value="RIBOFLAVIN KINASE"/>
    <property type="match status" value="1"/>
</dbReference>
<dbReference type="PANTHER" id="PTHR22749">
    <property type="entry name" value="RIBOFLAVIN KINASE/FMN ADENYLYLTRANSFERASE"/>
    <property type="match status" value="1"/>
</dbReference>
<dbReference type="Pfam" id="PF06574">
    <property type="entry name" value="FAD_syn"/>
    <property type="match status" value="1"/>
</dbReference>
<dbReference type="SUPFAM" id="SSF52374">
    <property type="entry name" value="Nucleotidylyl transferase"/>
    <property type="match status" value="1"/>
</dbReference>
<reference evidence="6" key="1">
    <citation type="journal article" date="2007" name="Proc. Natl. Acad. Sci. U.S.A.">
        <title>Genome and proteome of long-chain alkane degrading Geobacillus thermodenitrificans NG80-2 isolated from a deep-subsurface oil reservoir.</title>
        <authorList>
            <person name="Feng L."/>
            <person name="Wang W."/>
            <person name="Cheng J."/>
            <person name="Ren Y."/>
            <person name="Zhao G."/>
            <person name="Gao C."/>
            <person name="Tang Y."/>
            <person name="Liu X."/>
            <person name="Han W."/>
            <person name="Peng X."/>
            <person name="Liu R."/>
            <person name="Wang L."/>
        </authorList>
    </citation>
    <scope>NUCLEOTIDE SEQUENCE [LARGE SCALE GENOMIC DNA]</scope>
    <source>
        <strain>NG80-2</strain>
    </source>
</reference>
<reference evidence="5" key="2">
    <citation type="journal article" date="2010" name="Microbiology">
        <title>Characterization of the anthranilate degradation pathway in Geobacillus thermodenitrificans NG80-2.</title>
        <authorList>
            <person name="Liu X."/>
            <person name="Dong Y."/>
            <person name="Li X."/>
            <person name="Ren Y."/>
            <person name="Li Y."/>
            <person name="Wang W."/>
            <person name="Wang L."/>
            <person name="Feng L."/>
        </authorList>
    </citation>
    <scope>FUNCTION</scope>
    <scope>CATALYTIC ACTIVITY</scope>
    <scope>BIOPHYSICOCHEMICAL PROPERTIES</scope>
    <source>
        <strain evidence="3">NG80-2</strain>
    </source>
</reference>
<comment type="function">
    <text evidence="3">Catalyzes the phosphorylation of riboflavin to FMN followed by the adenylation of FMN to FAD.</text>
</comment>
<comment type="catalytic activity">
    <reaction evidence="3">
        <text>riboflavin + ATP = FMN + ADP + H(+)</text>
        <dbReference type="Rhea" id="RHEA:14357"/>
        <dbReference type="ChEBI" id="CHEBI:15378"/>
        <dbReference type="ChEBI" id="CHEBI:30616"/>
        <dbReference type="ChEBI" id="CHEBI:57986"/>
        <dbReference type="ChEBI" id="CHEBI:58210"/>
        <dbReference type="ChEBI" id="CHEBI:456216"/>
        <dbReference type="EC" id="2.7.1.26"/>
    </reaction>
</comment>
<comment type="catalytic activity">
    <reaction evidence="3">
        <text>FMN + ATP + H(+) = FAD + diphosphate</text>
        <dbReference type="Rhea" id="RHEA:17237"/>
        <dbReference type="ChEBI" id="CHEBI:15378"/>
        <dbReference type="ChEBI" id="CHEBI:30616"/>
        <dbReference type="ChEBI" id="CHEBI:33019"/>
        <dbReference type="ChEBI" id="CHEBI:57692"/>
        <dbReference type="ChEBI" id="CHEBI:58210"/>
        <dbReference type="EC" id="2.7.7.2"/>
    </reaction>
</comment>
<comment type="biophysicochemical properties">
    <kinetics>
        <Vmax evidence="3">270.3 umol/min/mg enzyme toward FMN</Vmax>
        <Vmax evidence="3">170.09 umol/min/mg enzyme toward riboflavin</Vmax>
    </kinetics>
</comment>
<comment type="pathway">
    <text evidence="1">Cofactor biosynthesis; FAD biosynthesis; FAD from FMN: step 1/1.</text>
</comment>
<comment type="pathway">
    <text evidence="1">Cofactor biosynthesis; FMN biosynthesis; FMN from riboflavin (ATP route): step 1/1.</text>
</comment>
<comment type="similarity">
    <text evidence="2">Belongs to the RibF family.</text>
</comment>
<comment type="caution">
    <text evidence="5">This sequence is divergent compared to other bacterial RibF.</text>
</comment>
<sequence length="179" mass="20167">MKVHEANQGLTLPGSVVAIGAFDGVHQGHQAVLRQAVERSRQLGVESVAYTIDPPPRCRFQGSRMLTTLQEKLDRFAVLGLNHAVVAHFDERYAARRVDAFIRELTALNPREVIVGQDFRFGRNREGDVALLRRHFPVRIVQTVCCADGQRISSTRIRELIERGEWEQSTVLLGWPLSS</sequence>
<name>RIBF_GEOTN</name>
<organism>
    <name type="scientific">Geobacillus thermodenitrificans (strain NG80-2)</name>
    <dbReference type="NCBI Taxonomy" id="420246"/>
    <lineage>
        <taxon>Bacteria</taxon>
        <taxon>Bacillati</taxon>
        <taxon>Bacillota</taxon>
        <taxon>Bacilli</taxon>
        <taxon>Bacillales</taxon>
        <taxon>Anoxybacillaceae</taxon>
        <taxon>Geobacillus</taxon>
    </lineage>
</organism>
<accession>A4IT50</accession>